<feature type="signal peptide" evidence="2">
    <location>
        <begin position="1"/>
        <end position="17"/>
    </location>
</feature>
<feature type="chain" id="PRO_0000373225" description="Protein MGF 110-14L">
    <location>
        <begin position="18"/>
        <end position="127"/>
    </location>
</feature>
<organismHost>
    <name type="scientific">Ornithodoros</name>
    <name type="common">relapsing fever ticks</name>
    <dbReference type="NCBI Taxonomy" id="6937"/>
</organismHost>
<organismHost>
    <name type="scientific">Phacochoerus aethiopicus</name>
    <name type="common">Warthog</name>
    <dbReference type="NCBI Taxonomy" id="85517"/>
</organismHost>
<organismHost>
    <name type="scientific">Phacochoerus africanus</name>
    <name type="common">Warthog</name>
    <dbReference type="NCBI Taxonomy" id="41426"/>
</organismHost>
<organismHost>
    <name type="scientific">Potamochoerus larvatus</name>
    <name type="common">Bushpig</name>
    <dbReference type="NCBI Taxonomy" id="273792"/>
</organismHost>
<organismHost>
    <name type="scientific">Sus scrofa</name>
    <name type="common">Pig</name>
    <dbReference type="NCBI Taxonomy" id="9823"/>
</organismHost>
<comment type="function">
    <text evidence="1">Plays a role in virus cell tropism, and may be required for efficient virus replication in macrophages.</text>
</comment>
<comment type="similarity">
    <text evidence="3">Belongs to the asfivirus MGF 110 family.</text>
</comment>
<dbReference type="EMBL" id="AY261361">
    <property type="status" value="NOT_ANNOTATED_CDS"/>
    <property type="molecule type" value="Genomic_DNA"/>
</dbReference>
<dbReference type="Proteomes" id="UP000000860">
    <property type="component" value="Segment"/>
</dbReference>
<dbReference type="InterPro" id="IPR004848">
    <property type="entry name" value="ASFV_fam_110"/>
</dbReference>
<dbReference type="Pfam" id="PF01639">
    <property type="entry name" value="v110"/>
    <property type="match status" value="1"/>
</dbReference>
<organism>
    <name type="scientific">African swine fever virus (isolate Tick/Malawi/Lil 20-1/1983)</name>
    <name type="common">ASFV</name>
    <dbReference type="NCBI Taxonomy" id="10500"/>
    <lineage>
        <taxon>Viruses</taxon>
        <taxon>Varidnaviria</taxon>
        <taxon>Bamfordvirae</taxon>
        <taxon>Nucleocytoviricota</taxon>
        <taxon>Pokkesviricetes</taxon>
        <taxon>Asfuvirales</taxon>
        <taxon>Asfarviridae</taxon>
        <taxon>Asfivirus</taxon>
        <taxon>African swine fever virus</taxon>
    </lineage>
</organism>
<name>11014_ASFM2</name>
<protein>
    <recommendedName>
        <fullName>Protein MGF 110-14L</fullName>
    </recommendedName>
</protein>
<reference key="1">
    <citation type="submission" date="2003-03" db="EMBL/GenBank/DDBJ databases">
        <title>African swine fever virus genomes.</title>
        <authorList>
            <person name="Kutish G.F."/>
            <person name="Rock D.L."/>
        </authorList>
    </citation>
    <scope>NUCLEOTIDE SEQUENCE [LARGE SCALE GENOMIC DNA]</scope>
</reference>
<keyword id="KW-0732">Signal</keyword>
<sequence>MKVLLELLLGYSVHILAHELPDLPRTQHPPKSELSYWCTYVPQCDFCWDCQDGICKNKITESHFIDSNHSIVNCRVFRDSKTQSCLYEISSKMPNHFSMECLHPRPYTGNEIFMQTWGGGVTINNYL</sequence>
<gene>
    <name type="ordered locus">Mal-019</name>
</gene>
<proteinExistence type="inferred from homology"/>
<accession>P0C9K3</accession>
<evidence type="ECO:0000250" key="1"/>
<evidence type="ECO:0000255" key="2"/>
<evidence type="ECO:0000305" key="3"/>